<proteinExistence type="inferred from homology"/>
<reference key="1">
    <citation type="journal article" date="2003" name="Lancet">
        <title>Genome sequence of Vibrio parahaemolyticus: a pathogenic mechanism distinct from that of V. cholerae.</title>
        <authorList>
            <person name="Makino K."/>
            <person name="Oshima K."/>
            <person name="Kurokawa K."/>
            <person name="Yokoyama K."/>
            <person name="Uda T."/>
            <person name="Tagomori K."/>
            <person name="Iijima Y."/>
            <person name="Najima M."/>
            <person name="Nakano M."/>
            <person name="Yamashita A."/>
            <person name="Kubota Y."/>
            <person name="Kimura S."/>
            <person name="Yasunaga T."/>
            <person name="Honda T."/>
            <person name="Shinagawa H."/>
            <person name="Hattori M."/>
            <person name="Iida T."/>
        </authorList>
    </citation>
    <scope>NUCLEOTIDE SEQUENCE [LARGE SCALE GENOMIC DNA]</scope>
    <source>
        <strain>RIMD 2210633</strain>
    </source>
</reference>
<keyword id="KW-0170">Cobalt</keyword>
<keyword id="KW-0963">Cytoplasm</keyword>
<keyword id="KW-0460">Magnesium</keyword>
<keyword id="KW-0479">Metal-binding</keyword>
<keyword id="KW-0520">NAD</keyword>
<keyword id="KW-0521">NADP</keyword>
<keyword id="KW-0560">Oxidoreductase</keyword>
<keyword id="KW-0664">Pyridoxine biosynthesis</keyword>
<keyword id="KW-0862">Zinc</keyword>
<organism>
    <name type="scientific">Vibrio parahaemolyticus serotype O3:K6 (strain RIMD 2210633)</name>
    <dbReference type="NCBI Taxonomy" id="223926"/>
    <lineage>
        <taxon>Bacteria</taxon>
        <taxon>Pseudomonadati</taxon>
        <taxon>Pseudomonadota</taxon>
        <taxon>Gammaproteobacteria</taxon>
        <taxon>Vibrionales</taxon>
        <taxon>Vibrionaceae</taxon>
        <taxon>Vibrio</taxon>
    </lineage>
</organism>
<accession>Q87ST5</accession>
<protein>
    <recommendedName>
        <fullName evidence="1">4-hydroxythreonine-4-phosphate dehydrogenase</fullName>
        <ecNumber evidence="1">1.1.1.262</ecNumber>
    </recommendedName>
    <alternativeName>
        <fullName evidence="1">4-(phosphohydroxy)-L-threonine dehydrogenase</fullName>
    </alternativeName>
</protein>
<name>PDXA_VIBPA</name>
<evidence type="ECO:0000255" key="1">
    <source>
        <dbReference type="HAMAP-Rule" id="MF_00536"/>
    </source>
</evidence>
<feature type="chain" id="PRO_0000188834" description="4-hydroxythreonine-4-phosphate dehydrogenase">
    <location>
        <begin position="1"/>
        <end position="332"/>
    </location>
</feature>
<feature type="binding site" evidence="1">
    <location>
        <position position="138"/>
    </location>
    <ligand>
        <name>substrate</name>
    </ligand>
</feature>
<feature type="binding site" evidence="1">
    <location>
        <position position="139"/>
    </location>
    <ligand>
        <name>substrate</name>
    </ligand>
</feature>
<feature type="binding site" evidence="1">
    <location>
        <position position="168"/>
    </location>
    <ligand>
        <name>a divalent metal cation</name>
        <dbReference type="ChEBI" id="CHEBI:60240"/>
        <note>ligand shared between dimeric partners</note>
    </ligand>
</feature>
<feature type="binding site" evidence="1">
    <location>
        <position position="213"/>
    </location>
    <ligand>
        <name>a divalent metal cation</name>
        <dbReference type="ChEBI" id="CHEBI:60240"/>
        <note>ligand shared between dimeric partners</note>
    </ligand>
</feature>
<feature type="binding site" evidence="1">
    <location>
        <position position="269"/>
    </location>
    <ligand>
        <name>a divalent metal cation</name>
        <dbReference type="ChEBI" id="CHEBI:60240"/>
        <note>ligand shared between dimeric partners</note>
    </ligand>
</feature>
<feature type="binding site" evidence="1">
    <location>
        <position position="277"/>
    </location>
    <ligand>
        <name>substrate</name>
    </ligand>
</feature>
<feature type="binding site" evidence="1">
    <location>
        <position position="286"/>
    </location>
    <ligand>
        <name>substrate</name>
    </ligand>
</feature>
<feature type="binding site" evidence="1">
    <location>
        <position position="295"/>
    </location>
    <ligand>
        <name>substrate</name>
    </ligand>
</feature>
<gene>
    <name evidence="1" type="primary">pdxA</name>
    <name type="ordered locus">VP0337</name>
</gene>
<sequence length="332" mass="36067">MTTNSIRRIVVTAGEPAGIGPDLVLALSKEDWAHQIVVCADKNMLLERAKMLGIDVQLFDYNPEEAPKAQKAGTLIVDHVEIAENAIAGQLNEANGHYVLKTLERAALGCMNDEFDAIVTGPVHKGVINRAGVAFSGHTEFFAEKSNTPLVVMMLATEGLRVALVTTHIPLAYVSKAVTEERLEKIIDILHKDLVEKFAIAEPNIYVCGLNPHAGEDGCLGREEIETITPTLEKIQKEKGIKLIGPLPADTIFNEKYLNDADAVLGMYHDQVLPVLKYKGFGRSVNITLGLPFIRTSVDHGTALELAGTGQADTGSFRTALTHAIELVEKKQ</sequence>
<dbReference type="EC" id="1.1.1.262" evidence="1"/>
<dbReference type="EMBL" id="BA000031">
    <property type="protein sequence ID" value="BAC58600.1"/>
    <property type="molecule type" value="Genomic_DNA"/>
</dbReference>
<dbReference type="RefSeq" id="NP_796716.1">
    <property type="nucleotide sequence ID" value="NC_004603.1"/>
</dbReference>
<dbReference type="RefSeq" id="WP_005459624.1">
    <property type="nucleotide sequence ID" value="NC_004603.1"/>
</dbReference>
<dbReference type="SMR" id="Q87ST5"/>
<dbReference type="GeneID" id="1187804"/>
<dbReference type="KEGG" id="vpa:VP0337"/>
<dbReference type="PATRIC" id="fig|223926.6.peg.324"/>
<dbReference type="eggNOG" id="COG1995">
    <property type="taxonomic scope" value="Bacteria"/>
</dbReference>
<dbReference type="HOGENOM" id="CLU_040168_2_0_6"/>
<dbReference type="UniPathway" id="UPA00244">
    <property type="reaction ID" value="UER00312"/>
</dbReference>
<dbReference type="Proteomes" id="UP000002493">
    <property type="component" value="Chromosome 1"/>
</dbReference>
<dbReference type="GO" id="GO:0005737">
    <property type="term" value="C:cytoplasm"/>
    <property type="evidence" value="ECO:0007669"/>
    <property type="project" value="UniProtKB-SubCell"/>
</dbReference>
<dbReference type="GO" id="GO:0050570">
    <property type="term" value="F:4-hydroxythreonine-4-phosphate dehydrogenase activity"/>
    <property type="evidence" value="ECO:0007669"/>
    <property type="project" value="UniProtKB-UniRule"/>
</dbReference>
<dbReference type="GO" id="GO:0050897">
    <property type="term" value="F:cobalt ion binding"/>
    <property type="evidence" value="ECO:0007669"/>
    <property type="project" value="UniProtKB-UniRule"/>
</dbReference>
<dbReference type="GO" id="GO:0000287">
    <property type="term" value="F:magnesium ion binding"/>
    <property type="evidence" value="ECO:0007669"/>
    <property type="project" value="UniProtKB-UniRule"/>
</dbReference>
<dbReference type="GO" id="GO:0051287">
    <property type="term" value="F:NAD binding"/>
    <property type="evidence" value="ECO:0007669"/>
    <property type="project" value="InterPro"/>
</dbReference>
<dbReference type="GO" id="GO:0008270">
    <property type="term" value="F:zinc ion binding"/>
    <property type="evidence" value="ECO:0007669"/>
    <property type="project" value="UniProtKB-UniRule"/>
</dbReference>
<dbReference type="GO" id="GO:0042823">
    <property type="term" value="P:pyridoxal phosphate biosynthetic process"/>
    <property type="evidence" value="ECO:0007669"/>
    <property type="project" value="UniProtKB-UniRule"/>
</dbReference>
<dbReference type="GO" id="GO:0008615">
    <property type="term" value="P:pyridoxine biosynthetic process"/>
    <property type="evidence" value="ECO:0007669"/>
    <property type="project" value="UniProtKB-UniRule"/>
</dbReference>
<dbReference type="Gene3D" id="3.40.718.10">
    <property type="entry name" value="Isopropylmalate Dehydrogenase"/>
    <property type="match status" value="1"/>
</dbReference>
<dbReference type="HAMAP" id="MF_00536">
    <property type="entry name" value="PdxA"/>
    <property type="match status" value="1"/>
</dbReference>
<dbReference type="InterPro" id="IPR037510">
    <property type="entry name" value="PdxA"/>
</dbReference>
<dbReference type="InterPro" id="IPR005255">
    <property type="entry name" value="PdxA_fam"/>
</dbReference>
<dbReference type="NCBIfam" id="TIGR00557">
    <property type="entry name" value="pdxA"/>
    <property type="match status" value="1"/>
</dbReference>
<dbReference type="PANTHER" id="PTHR30004">
    <property type="entry name" value="4-HYDROXYTHREONINE-4-PHOSPHATE DEHYDROGENASE"/>
    <property type="match status" value="1"/>
</dbReference>
<dbReference type="PANTHER" id="PTHR30004:SF5">
    <property type="entry name" value="4-HYDROXYTHREONINE-4-PHOSPHATE DEHYDROGENASE"/>
    <property type="match status" value="1"/>
</dbReference>
<dbReference type="Pfam" id="PF04166">
    <property type="entry name" value="PdxA"/>
    <property type="match status" value="1"/>
</dbReference>
<dbReference type="SUPFAM" id="SSF53659">
    <property type="entry name" value="Isocitrate/Isopropylmalate dehydrogenase-like"/>
    <property type="match status" value="1"/>
</dbReference>
<comment type="function">
    <text evidence="1">Catalyzes the NAD(P)-dependent oxidation of 4-(phosphooxy)-L-threonine (HTP) into 2-amino-3-oxo-4-(phosphooxy)butyric acid which spontaneously decarboxylates to form 3-amino-2-oxopropyl phosphate (AHAP).</text>
</comment>
<comment type="catalytic activity">
    <reaction evidence="1">
        <text>4-(phosphooxy)-L-threonine + NAD(+) = 3-amino-2-oxopropyl phosphate + CO2 + NADH</text>
        <dbReference type="Rhea" id="RHEA:32275"/>
        <dbReference type="ChEBI" id="CHEBI:16526"/>
        <dbReference type="ChEBI" id="CHEBI:57279"/>
        <dbReference type="ChEBI" id="CHEBI:57540"/>
        <dbReference type="ChEBI" id="CHEBI:57945"/>
        <dbReference type="ChEBI" id="CHEBI:58452"/>
        <dbReference type="EC" id="1.1.1.262"/>
    </reaction>
</comment>
<comment type="cofactor">
    <cofactor evidence="1">
        <name>Zn(2+)</name>
        <dbReference type="ChEBI" id="CHEBI:29105"/>
    </cofactor>
    <cofactor evidence="1">
        <name>Mg(2+)</name>
        <dbReference type="ChEBI" id="CHEBI:18420"/>
    </cofactor>
    <cofactor evidence="1">
        <name>Co(2+)</name>
        <dbReference type="ChEBI" id="CHEBI:48828"/>
    </cofactor>
    <text evidence="1">Binds 1 divalent metal cation per subunit. Can use ions such as Zn(2+), Mg(2+) or Co(2+).</text>
</comment>
<comment type="pathway">
    <text evidence="1">Cofactor biosynthesis; pyridoxine 5'-phosphate biosynthesis; pyridoxine 5'-phosphate from D-erythrose 4-phosphate: step 4/5.</text>
</comment>
<comment type="subunit">
    <text evidence="1">Homodimer.</text>
</comment>
<comment type="subcellular location">
    <subcellularLocation>
        <location evidence="1">Cytoplasm</location>
    </subcellularLocation>
</comment>
<comment type="miscellaneous">
    <text evidence="1">The active site is located at the dimer interface.</text>
</comment>
<comment type="similarity">
    <text evidence="1">Belongs to the PdxA family.</text>
</comment>